<keyword id="KW-0067">ATP-binding</keyword>
<keyword id="KW-0547">Nucleotide-binding</keyword>
<keyword id="KW-1185">Reference proteome</keyword>
<keyword id="KW-0813">Transport</keyword>
<name>Y382_RHIME</name>
<reference key="1">
    <citation type="journal article" date="1989" name="J. Bacteriol.">
        <title>Identification of a gene linked to Rhizobium meliloti ntrA whose product is homologous to a family to ATP-binding proteins.</title>
        <authorList>
            <person name="Albright L.M."/>
            <person name="Ronson C.W."/>
            <person name="Nixon B.T."/>
            <person name="Ausubel F.M."/>
        </authorList>
    </citation>
    <scope>NUCLEOTIDE SEQUENCE [GENOMIC DNA]</scope>
</reference>
<reference key="2">
    <citation type="journal article" date="2001" name="Proc. Natl. Acad. Sci. U.S.A.">
        <title>Analysis of the chromosome sequence of the legume symbiont Sinorhizobium meliloti strain 1021.</title>
        <authorList>
            <person name="Capela D."/>
            <person name="Barloy-Hubler F."/>
            <person name="Gouzy J."/>
            <person name="Bothe G."/>
            <person name="Ampe F."/>
            <person name="Batut J."/>
            <person name="Boistard P."/>
            <person name="Becker A."/>
            <person name="Boutry M."/>
            <person name="Cadieu E."/>
            <person name="Dreano S."/>
            <person name="Gloux S."/>
            <person name="Godrie T."/>
            <person name="Goffeau A."/>
            <person name="Kahn D."/>
            <person name="Kiss E."/>
            <person name="Lelaure V."/>
            <person name="Masuy D."/>
            <person name="Pohl T."/>
            <person name="Portetelle D."/>
            <person name="Puehler A."/>
            <person name="Purnelle B."/>
            <person name="Ramsperger U."/>
            <person name="Renard C."/>
            <person name="Thebault P."/>
            <person name="Vandenbol M."/>
            <person name="Weidner S."/>
            <person name="Galibert F."/>
        </authorList>
    </citation>
    <scope>NUCLEOTIDE SEQUENCE [LARGE SCALE GENOMIC DNA]</scope>
    <source>
        <strain>1021</strain>
    </source>
</reference>
<reference key="3">
    <citation type="journal article" date="2001" name="Science">
        <title>The composite genome of the legume symbiont Sinorhizobium meliloti.</title>
        <authorList>
            <person name="Galibert F."/>
            <person name="Finan T.M."/>
            <person name="Long S.R."/>
            <person name="Puehler A."/>
            <person name="Abola P."/>
            <person name="Ampe F."/>
            <person name="Barloy-Hubler F."/>
            <person name="Barnett M.J."/>
            <person name="Becker A."/>
            <person name="Boistard P."/>
            <person name="Bothe G."/>
            <person name="Boutry M."/>
            <person name="Bowser L."/>
            <person name="Buhrmester J."/>
            <person name="Cadieu E."/>
            <person name="Capela D."/>
            <person name="Chain P."/>
            <person name="Cowie A."/>
            <person name="Davis R.W."/>
            <person name="Dreano S."/>
            <person name="Federspiel N.A."/>
            <person name="Fisher R.F."/>
            <person name="Gloux S."/>
            <person name="Godrie T."/>
            <person name="Goffeau A."/>
            <person name="Golding B."/>
            <person name="Gouzy J."/>
            <person name="Gurjal M."/>
            <person name="Hernandez-Lucas I."/>
            <person name="Hong A."/>
            <person name="Huizar L."/>
            <person name="Hyman R.W."/>
            <person name="Jones T."/>
            <person name="Kahn D."/>
            <person name="Kahn M.L."/>
            <person name="Kalman S."/>
            <person name="Keating D.H."/>
            <person name="Kiss E."/>
            <person name="Komp C."/>
            <person name="Lelaure V."/>
            <person name="Masuy D."/>
            <person name="Palm C."/>
            <person name="Peck M.C."/>
            <person name="Pohl T.M."/>
            <person name="Portetelle D."/>
            <person name="Purnelle B."/>
            <person name="Ramsperger U."/>
            <person name="Surzycki R."/>
            <person name="Thebault P."/>
            <person name="Vandenbol M."/>
            <person name="Vorhoelter F.J."/>
            <person name="Weidner S."/>
            <person name="Wells D.H."/>
            <person name="Wong K."/>
            <person name="Yeh K.-C."/>
            <person name="Batut J."/>
        </authorList>
    </citation>
    <scope>NUCLEOTIDE SEQUENCE [LARGE SCALE GENOMIC DNA]</scope>
    <source>
        <strain>1021</strain>
    </source>
</reference>
<proteinExistence type="inferred from homology"/>
<gene>
    <name type="ordered locus">R00382</name>
    <name type="ORF">SMc01138</name>
</gene>
<comment type="similarity">
    <text evidence="2">Belongs to the ABC transporter superfamily.</text>
</comment>
<dbReference type="EMBL" id="M24926">
    <property type="protein sequence ID" value="AAA26348.1"/>
    <property type="molecule type" value="Genomic_DNA"/>
</dbReference>
<dbReference type="EMBL" id="AL591688">
    <property type="protein sequence ID" value="CAC41819.1"/>
    <property type="molecule type" value="Genomic_DNA"/>
</dbReference>
<dbReference type="PIR" id="B32835">
    <property type="entry name" value="B32835"/>
</dbReference>
<dbReference type="RefSeq" id="NP_384488.1">
    <property type="nucleotide sequence ID" value="NC_003047.1"/>
</dbReference>
<dbReference type="SMR" id="P25885"/>
<dbReference type="EnsemblBacteria" id="CAC41819">
    <property type="protein sequence ID" value="CAC41819"/>
    <property type="gene ID" value="SMc01138"/>
</dbReference>
<dbReference type="KEGG" id="sme:SMc01138"/>
<dbReference type="PATRIC" id="fig|266834.11.peg.1755"/>
<dbReference type="eggNOG" id="COG1137">
    <property type="taxonomic scope" value="Bacteria"/>
</dbReference>
<dbReference type="HOGENOM" id="CLU_000604_1_2_5"/>
<dbReference type="OrthoDB" id="9776369at2"/>
<dbReference type="Proteomes" id="UP000001976">
    <property type="component" value="Chromosome"/>
</dbReference>
<dbReference type="GO" id="GO:0043190">
    <property type="term" value="C:ATP-binding cassette (ABC) transporter complex"/>
    <property type="evidence" value="ECO:0007669"/>
    <property type="project" value="InterPro"/>
</dbReference>
<dbReference type="GO" id="GO:0005524">
    <property type="term" value="F:ATP binding"/>
    <property type="evidence" value="ECO:0007669"/>
    <property type="project" value="UniProtKB-KW"/>
</dbReference>
<dbReference type="GO" id="GO:0016887">
    <property type="term" value="F:ATP hydrolysis activity"/>
    <property type="evidence" value="ECO:0007669"/>
    <property type="project" value="InterPro"/>
</dbReference>
<dbReference type="GO" id="GO:0055085">
    <property type="term" value="P:transmembrane transport"/>
    <property type="evidence" value="ECO:0007669"/>
    <property type="project" value="InterPro"/>
</dbReference>
<dbReference type="CDD" id="cd03218">
    <property type="entry name" value="ABC_YhbG"/>
    <property type="match status" value="1"/>
</dbReference>
<dbReference type="FunFam" id="3.40.50.300:FF:000151">
    <property type="entry name" value="Lipopolysaccharide ABC transporter ATP-binding protein"/>
    <property type="match status" value="1"/>
</dbReference>
<dbReference type="Gene3D" id="3.40.50.300">
    <property type="entry name" value="P-loop containing nucleotide triphosphate hydrolases"/>
    <property type="match status" value="1"/>
</dbReference>
<dbReference type="InterPro" id="IPR003593">
    <property type="entry name" value="AAA+_ATPase"/>
</dbReference>
<dbReference type="InterPro" id="IPR051120">
    <property type="entry name" value="ABC_AA/LPS_Transport"/>
</dbReference>
<dbReference type="InterPro" id="IPR003439">
    <property type="entry name" value="ABC_transporter-like_ATP-bd"/>
</dbReference>
<dbReference type="InterPro" id="IPR017871">
    <property type="entry name" value="ABC_transporter-like_CS"/>
</dbReference>
<dbReference type="InterPro" id="IPR030921">
    <property type="entry name" value="LPS_export_LptB"/>
</dbReference>
<dbReference type="InterPro" id="IPR027417">
    <property type="entry name" value="P-loop_NTPase"/>
</dbReference>
<dbReference type="NCBIfam" id="TIGR04406">
    <property type="entry name" value="LPS_export_lptB"/>
    <property type="match status" value="1"/>
</dbReference>
<dbReference type="PANTHER" id="PTHR45772">
    <property type="entry name" value="CONSERVED COMPONENT OF ABC TRANSPORTER FOR NATURAL AMINO ACIDS-RELATED"/>
    <property type="match status" value="1"/>
</dbReference>
<dbReference type="PANTHER" id="PTHR45772:SF10">
    <property type="entry name" value="LIPOPOLYSACCHARIDE EXPORT SYSTEM ATP-BINDING PROTEIN LPTB"/>
    <property type="match status" value="1"/>
</dbReference>
<dbReference type="Pfam" id="PF00005">
    <property type="entry name" value="ABC_tran"/>
    <property type="match status" value="1"/>
</dbReference>
<dbReference type="SMART" id="SM00382">
    <property type="entry name" value="AAA"/>
    <property type="match status" value="1"/>
</dbReference>
<dbReference type="SUPFAM" id="SSF52540">
    <property type="entry name" value="P-loop containing nucleoside triphosphate hydrolases"/>
    <property type="match status" value="1"/>
</dbReference>
<dbReference type="PROSITE" id="PS00211">
    <property type="entry name" value="ABC_TRANSPORTER_1"/>
    <property type="match status" value="1"/>
</dbReference>
<dbReference type="PROSITE" id="PS50893">
    <property type="entry name" value="ABC_TRANSPORTER_2"/>
    <property type="match status" value="1"/>
</dbReference>
<organism>
    <name type="scientific">Rhizobium meliloti (strain 1021)</name>
    <name type="common">Ensifer meliloti</name>
    <name type="synonym">Sinorhizobium meliloti</name>
    <dbReference type="NCBI Taxonomy" id="266834"/>
    <lineage>
        <taxon>Bacteria</taxon>
        <taxon>Pseudomonadati</taxon>
        <taxon>Pseudomonadota</taxon>
        <taxon>Alphaproteobacteria</taxon>
        <taxon>Hyphomicrobiales</taxon>
        <taxon>Rhizobiaceae</taxon>
        <taxon>Sinorhizobium/Ensifer group</taxon>
        <taxon>Sinorhizobium</taxon>
    </lineage>
</organism>
<protein>
    <recommendedName>
        <fullName>Uncharacterized ABC transporter ATP-binding protein R00382</fullName>
    </recommendedName>
</protein>
<accession>P25885</accession>
<feature type="chain" id="PRO_0000093185" description="Uncharacterized ABC transporter ATP-binding protein R00382">
    <location>
        <begin position="1"/>
        <end position="270"/>
    </location>
</feature>
<feature type="domain" description="ABC transporter" evidence="1">
    <location>
        <begin position="34"/>
        <end position="266"/>
    </location>
</feature>
<feature type="binding site" evidence="1">
    <location>
        <begin position="66"/>
        <end position="73"/>
    </location>
    <ligand>
        <name>ATP</name>
        <dbReference type="ChEBI" id="CHEBI:30616"/>
    </ligand>
</feature>
<sequence>MQIPFLHKRKRGKKPSAAAAAARAVDKARYDGTLIARGLTKSYRSRRVVNGVSLVVRRGEAVGLLGPNGAGKTTCFYMITGLVPVDEGSIEINGNDVTTMPMYRRARLGVGYLPQEASIFRGLTVEDNIRAVLEVHDENVDRRESKLNDLLGEFSITHLRKSPAIALSGGERRRLEIARALATDPTFMLLDEPFAGVDPISVADIQALVRHLTSRGIGVLITDHNVRETLGLIDRAYIIHAGEVLTHGRANDIVTNPDVRRLYLGDNFSL</sequence>
<evidence type="ECO:0000255" key="1">
    <source>
        <dbReference type="PROSITE-ProRule" id="PRU00434"/>
    </source>
</evidence>
<evidence type="ECO:0000305" key="2"/>